<keyword id="KW-0012">Acyltransferase</keyword>
<keyword id="KW-0414">Isoprene biosynthesis</keyword>
<keyword id="KW-1185">Reference proteome</keyword>
<keyword id="KW-0808">Transferase</keyword>
<name>HMGCS_METMP</name>
<feature type="chain" id="PRO_0000057617" description="Hydroxymethylglutaryl-CoA synthase">
    <location>
        <begin position="1"/>
        <end position="349"/>
    </location>
</feature>
<feature type="active site" description="Proton donor/acceptor" evidence="1">
    <location>
        <position position="82"/>
    </location>
</feature>
<feature type="active site" description="Acyl-thioester intermediate" evidence="1">
    <location>
        <position position="114"/>
    </location>
</feature>
<feature type="active site" description="Proton donor/acceptor" evidence="1">
    <location>
        <position position="238"/>
    </location>
</feature>
<feature type="binding site" evidence="1">
    <location>
        <position position="30"/>
    </location>
    <ligand>
        <name>(3S)-3-hydroxy-3-methylglutaryl-CoA</name>
        <dbReference type="ChEBI" id="CHEBI:43074"/>
    </ligand>
</feature>
<feature type="binding site" evidence="1">
    <location>
        <position position="31"/>
    </location>
    <ligand>
        <name>(3S)-3-hydroxy-3-methylglutaryl-CoA</name>
        <dbReference type="ChEBI" id="CHEBI:43074"/>
    </ligand>
</feature>
<feature type="binding site" evidence="1">
    <location>
        <position position="114"/>
    </location>
    <ligand>
        <name>(3S)-3-hydroxy-3-methylglutaryl-CoA</name>
        <dbReference type="ChEBI" id="CHEBI:43074"/>
    </ligand>
</feature>
<feature type="binding site" evidence="1">
    <location>
        <position position="155"/>
    </location>
    <ligand>
        <name>(3S)-3-hydroxy-3-methylglutaryl-CoA</name>
        <dbReference type="ChEBI" id="CHEBI:43074"/>
    </ligand>
</feature>
<feature type="binding site" evidence="1">
    <location>
        <position position="203"/>
    </location>
    <ligand>
        <name>CoA</name>
        <dbReference type="ChEBI" id="CHEBI:57287"/>
        <note>ligand shared with acetoacetyl-CoA thiolase</note>
    </ligand>
</feature>
<feature type="binding site" evidence="1">
    <location>
        <position position="205"/>
    </location>
    <ligand>
        <name>(3S)-3-hydroxy-3-methylglutaryl-CoA</name>
        <dbReference type="ChEBI" id="CHEBI:43074"/>
    </ligand>
</feature>
<feature type="binding site" evidence="1">
    <location>
        <position position="238"/>
    </location>
    <ligand>
        <name>(3S)-3-hydroxy-3-methylglutaryl-CoA</name>
        <dbReference type="ChEBI" id="CHEBI:43074"/>
    </ligand>
</feature>
<feature type="binding site" evidence="1">
    <location>
        <position position="243"/>
    </location>
    <ligand>
        <name>CoA</name>
        <dbReference type="ChEBI" id="CHEBI:57287"/>
        <note>ligand shared with acetoacetyl-CoA thiolase</note>
    </ligand>
</feature>
<feature type="binding site" evidence="1">
    <location>
        <position position="270"/>
    </location>
    <ligand>
        <name>(3S)-3-hydroxy-3-methylglutaryl-CoA</name>
        <dbReference type="ChEBI" id="CHEBI:43074"/>
    </ligand>
</feature>
<feature type="binding site" evidence="1">
    <location>
        <position position="300"/>
    </location>
    <ligand>
        <name>(3S)-3-hydroxy-3-methylglutaryl-CoA</name>
        <dbReference type="ChEBI" id="CHEBI:43074"/>
    </ligand>
</feature>
<evidence type="ECO:0000255" key="1">
    <source>
        <dbReference type="HAMAP-Rule" id="MF_01409"/>
    </source>
</evidence>
<comment type="function">
    <text evidence="1">Catalyzes the condensation of acetyl-CoA with acetoacetyl-CoA to form 3-hydroxy-3-methylglutaryl-CoA (HMG-CoA). Functions in the mevalonate (MVA) pathway leading to isopentenyl diphosphate (IPP), a key precursor for the biosynthesis of isoprenoid compounds that are building blocks of archaeal membrane lipids.</text>
</comment>
<comment type="catalytic activity">
    <reaction evidence="1">
        <text>acetoacetyl-CoA + acetyl-CoA + H2O = (3S)-3-hydroxy-3-methylglutaryl-CoA + CoA + H(+)</text>
        <dbReference type="Rhea" id="RHEA:10188"/>
        <dbReference type="ChEBI" id="CHEBI:15377"/>
        <dbReference type="ChEBI" id="CHEBI:15378"/>
        <dbReference type="ChEBI" id="CHEBI:43074"/>
        <dbReference type="ChEBI" id="CHEBI:57286"/>
        <dbReference type="ChEBI" id="CHEBI:57287"/>
        <dbReference type="ChEBI" id="CHEBI:57288"/>
        <dbReference type="EC" id="2.3.3.10"/>
    </reaction>
    <physiologicalReaction direction="left-to-right" evidence="1">
        <dbReference type="Rhea" id="RHEA:10189"/>
    </physiologicalReaction>
</comment>
<comment type="pathway">
    <text evidence="1">Metabolic intermediate biosynthesis; (R)-mevalonate biosynthesis; (R)-mevalonate from acetyl-CoA: step 2/3.</text>
</comment>
<comment type="subunit">
    <text evidence="1">Interacts with acetoacetyl-CoA thiolase that catalyzes the precedent step in the pathway and with a DUF35 protein. The acetoacetyl-CoA thiolase/HMG-CoA synthase complex channels the intermediate via a fused CoA-binding site, which allows for efficient coupling of the endergonic thiolase reaction with the exergonic HMGCS reaction.</text>
</comment>
<comment type="similarity">
    <text evidence="1">Belongs to the thiolase-like superfamily. Archaeal HMG-CoA synthase family.</text>
</comment>
<reference key="1">
    <citation type="journal article" date="2004" name="J. Bacteriol.">
        <title>Complete genome sequence of the genetically tractable hydrogenotrophic methanogen Methanococcus maripaludis.</title>
        <authorList>
            <person name="Hendrickson E.L."/>
            <person name="Kaul R."/>
            <person name="Zhou Y."/>
            <person name="Bovee D."/>
            <person name="Chapman P."/>
            <person name="Chung J."/>
            <person name="Conway de Macario E."/>
            <person name="Dodsworth J.A."/>
            <person name="Gillett W."/>
            <person name="Graham D.E."/>
            <person name="Hackett M."/>
            <person name="Haydock A.K."/>
            <person name="Kang A."/>
            <person name="Land M.L."/>
            <person name="Levy R."/>
            <person name="Lie T.J."/>
            <person name="Major T.A."/>
            <person name="Moore B.C."/>
            <person name="Porat I."/>
            <person name="Palmeiri A."/>
            <person name="Rouse G."/>
            <person name="Saenphimmachak C."/>
            <person name="Soell D."/>
            <person name="Van Dien S."/>
            <person name="Wang T."/>
            <person name="Whitman W.B."/>
            <person name="Xia Q."/>
            <person name="Zhang Y."/>
            <person name="Larimer F.W."/>
            <person name="Olson M.V."/>
            <person name="Leigh J.A."/>
        </authorList>
    </citation>
    <scope>NUCLEOTIDE SEQUENCE [LARGE SCALE GENOMIC DNA]</scope>
    <source>
        <strain>DSM 14266 / JCM 13030 / NBRC 101832 / S2 / LL</strain>
    </source>
</reference>
<accession>Q6LXY3</accession>
<sequence length="349" mass="37738">MKEVGIVGYGSDLPKYRIKAEDIAGAWGKDAQAIKRGLVVNEKSVPGPDEDTATIAVQSARRALSRAGINPKDIGAVYVGSESHPYAVKPTSGIVAEACGVSPDFTAADLEFACKAGTAGIQMCMGLVGSEMMEYAMAVGADTAQGAPGDALEYTAAAGGAAFIIGAKKEEFIAKFNGTYSYTTDTPDFWRREHEHYPKHGGRFTGEPAYFKHVLNGAKGMMEKMGTTSKDYDYCVFHQPNGKFYLTAAKKLGFTEEQYKYGLLTPYLGNTYSGAVPLGLSNILDHAKADDRIFVVSYGSGAGSDAFDITVTDRISEVVDKEITTEKLLEQKKYVDYAVYLKYRGKIRM</sequence>
<proteinExistence type="inferred from homology"/>
<organism>
    <name type="scientific">Methanococcus maripaludis (strain DSM 14266 / JCM 13030 / NBRC 101832 / S2 / LL)</name>
    <dbReference type="NCBI Taxonomy" id="267377"/>
    <lineage>
        <taxon>Archaea</taxon>
        <taxon>Methanobacteriati</taxon>
        <taxon>Methanobacteriota</taxon>
        <taxon>Methanomada group</taxon>
        <taxon>Methanococci</taxon>
        <taxon>Methanococcales</taxon>
        <taxon>Methanococcaceae</taxon>
        <taxon>Methanococcus</taxon>
    </lineage>
</organism>
<protein>
    <recommendedName>
        <fullName evidence="1">Hydroxymethylglutaryl-CoA synthase</fullName>
        <shortName evidence="1">HMG-CoA synthase</shortName>
        <shortName evidence="1">HMGCS</shortName>
        <ecNumber evidence="1">2.3.3.10</ecNumber>
    </recommendedName>
</protein>
<gene>
    <name type="ordered locus">MMP1211</name>
</gene>
<dbReference type="EC" id="2.3.3.10" evidence="1"/>
<dbReference type="EMBL" id="BX950229">
    <property type="protein sequence ID" value="CAF30767.1"/>
    <property type="molecule type" value="Genomic_DNA"/>
</dbReference>
<dbReference type="RefSeq" id="WP_011171155.1">
    <property type="nucleotide sequence ID" value="NC_005791.1"/>
</dbReference>
<dbReference type="SMR" id="Q6LXY3"/>
<dbReference type="STRING" id="267377.MMP1211"/>
<dbReference type="EnsemblBacteria" id="CAF30767">
    <property type="protein sequence ID" value="CAF30767"/>
    <property type="gene ID" value="MMP1211"/>
</dbReference>
<dbReference type="KEGG" id="mmp:MMP1211"/>
<dbReference type="PATRIC" id="fig|267377.15.peg.1244"/>
<dbReference type="eggNOG" id="arCOG01767">
    <property type="taxonomic scope" value="Archaea"/>
</dbReference>
<dbReference type="HOGENOM" id="CLU_039592_7_0_2"/>
<dbReference type="OrthoDB" id="5812at2157"/>
<dbReference type="UniPathway" id="UPA00058">
    <property type="reaction ID" value="UER00102"/>
</dbReference>
<dbReference type="Proteomes" id="UP000000590">
    <property type="component" value="Chromosome"/>
</dbReference>
<dbReference type="GO" id="GO:0003985">
    <property type="term" value="F:acetyl-CoA C-acetyltransferase activity"/>
    <property type="evidence" value="ECO:0007669"/>
    <property type="project" value="UniProtKB-UniRule"/>
</dbReference>
<dbReference type="GO" id="GO:0004421">
    <property type="term" value="F:hydroxymethylglutaryl-CoA synthase activity"/>
    <property type="evidence" value="ECO:0007669"/>
    <property type="project" value="InterPro"/>
</dbReference>
<dbReference type="GO" id="GO:0010142">
    <property type="term" value="P:farnesyl diphosphate biosynthetic process, mevalonate pathway"/>
    <property type="evidence" value="ECO:0007669"/>
    <property type="project" value="TreeGrafter"/>
</dbReference>
<dbReference type="GO" id="GO:0019287">
    <property type="term" value="P:isopentenyl diphosphate biosynthetic process, mevalonate pathway"/>
    <property type="evidence" value="ECO:0007669"/>
    <property type="project" value="UniProtKB-UniRule"/>
</dbReference>
<dbReference type="CDD" id="cd00827">
    <property type="entry name" value="init_cond_enzymes"/>
    <property type="match status" value="1"/>
</dbReference>
<dbReference type="FunFam" id="3.40.47.10:FF:000046">
    <property type="entry name" value="UPF0219 protein M1627_1703"/>
    <property type="match status" value="1"/>
</dbReference>
<dbReference type="Gene3D" id="3.40.47.10">
    <property type="match status" value="1"/>
</dbReference>
<dbReference type="HAMAP" id="MF_01409">
    <property type="entry name" value="HMG_CoA_synth_arch"/>
    <property type="match status" value="1"/>
</dbReference>
<dbReference type="InterPro" id="IPR013747">
    <property type="entry name" value="ACP_syn_III_C"/>
</dbReference>
<dbReference type="InterPro" id="IPR004656">
    <property type="entry name" value="HMG_CoA_Synthase"/>
</dbReference>
<dbReference type="InterPro" id="IPR016039">
    <property type="entry name" value="Thiolase-like"/>
</dbReference>
<dbReference type="NCBIfam" id="TIGR00748">
    <property type="entry name" value="HMG_CoA_syn_Arc"/>
    <property type="match status" value="1"/>
</dbReference>
<dbReference type="NCBIfam" id="NF003274">
    <property type="entry name" value="PRK04262.1"/>
    <property type="match status" value="1"/>
</dbReference>
<dbReference type="PANTHER" id="PTHR43323">
    <property type="entry name" value="3-HYDROXY-3-METHYLGLUTARYL COENZYME A SYNTHASE"/>
    <property type="match status" value="1"/>
</dbReference>
<dbReference type="PANTHER" id="PTHR43323:SF2">
    <property type="entry name" value="HYDROXYMETHYLGLUTARYL-COA SYNTHASE"/>
    <property type="match status" value="1"/>
</dbReference>
<dbReference type="Pfam" id="PF08541">
    <property type="entry name" value="ACP_syn_III_C"/>
    <property type="match status" value="1"/>
</dbReference>
<dbReference type="SUPFAM" id="SSF53901">
    <property type="entry name" value="Thiolase-like"/>
    <property type="match status" value="2"/>
</dbReference>